<reference key="1">
    <citation type="journal article" date="2000" name="Nature">
        <title>Sequence and analysis of chromosome 3 of the plant Arabidopsis thaliana.</title>
        <authorList>
            <person name="Salanoubat M."/>
            <person name="Lemcke K."/>
            <person name="Rieger M."/>
            <person name="Ansorge W."/>
            <person name="Unseld M."/>
            <person name="Fartmann B."/>
            <person name="Valle G."/>
            <person name="Bloecker H."/>
            <person name="Perez-Alonso M."/>
            <person name="Obermaier B."/>
            <person name="Delseny M."/>
            <person name="Boutry M."/>
            <person name="Grivell L.A."/>
            <person name="Mache R."/>
            <person name="Puigdomenech P."/>
            <person name="De Simone V."/>
            <person name="Choisne N."/>
            <person name="Artiguenave F."/>
            <person name="Robert C."/>
            <person name="Brottier P."/>
            <person name="Wincker P."/>
            <person name="Cattolico L."/>
            <person name="Weissenbach J."/>
            <person name="Saurin W."/>
            <person name="Quetier F."/>
            <person name="Schaefer M."/>
            <person name="Mueller-Auer S."/>
            <person name="Gabel C."/>
            <person name="Fuchs M."/>
            <person name="Benes V."/>
            <person name="Wurmbach E."/>
            <person name="Drzonek H."/>
            <person name="Erfle H."/>
            <person name="Jordan N."/>
            <person name="Bangert S."/>
            <person name="Wiedelmann R."/>
            <person name="Kranz H."/>
            <person name="Voss H."/>
            <person name="Holland R."/>
            <person name="Brandt P."/>
            <person name="Nyakatura G."/>
            <person name="Vezzi A."/>
            <person name="D'Angelo M."/>
            <person name="Pallavicini A."/>
            <person name="Toppo S."/>
            <person name="Simionati B."/>
            <person name="Conrad A."/>
            <person name="Hornischer K."/>
            <person name="Kauer G."/>
            <person name="Loehnert T.-H."/>
            <person name="Nordsiek G."/>
            <person name="Reichelt J."/>
            <person name="Scharfe M."/>
            <person name="Schoen O."/>
            <person name="Bargues M."/>
            <person name="Terol J."/>
            <person name="Climent J."/>
            <person name="Navarro P."/>
            <person name="Collado C."/>
            <person name="Perez-Perez A."/>
            <person name="Ottenwaelder B."/>
            <person name="Duchemin D."/>
            <person name="Cooke R."/>
            <person name="Laudie M."/>
            <person name="Berger-Llauro C."/>
            <person name="Purnelle B."/>
            <person name="Masuy D."/>
            <person name="de Haan M."/>
            <person name="Maarse A.C."/>
            <person name="Alcaraz J.-P."/>
            <person name="Cottet A."/>
            <person name="Casacuberta E."/>
            <person name="Monfort A."/>
            <person name="Argiriou A."/>
            <person name="Flores M."/>
            <person name="Liguori R."/>
            <person name="Vitale D."/>
            <person name="Mannhaupt G."/>
            <person name="Haase D."/>
            <person name="Schoof H."/>
            <person name="Rudd S."/>
            <person name="Zaccaria P."/>
            <person name="Mewes H.-W."/>
            <person name="Mayer K.F.X."/>
            <person name="Kaul S."/>
            <person name="Town C.D."/>
            <person name="Koo H.L."/>
            <person name="Tallon L.J."/>
            <person name="Jenkins J."/>
            <person name="Rooney T."/>
            <person name="Rizzo M."/>
            <person name="Walts A."/>
            <person name="Utterback T."/>
            <person name="Fujii C.Y."/>
            <person name="Shea T.P."/>
            <person name="Creasy T.H."/>
            <person name="Haas B."/>
            <person name="Maiti R."/>
            <person name="Wu D."/>
            <person name="Peterson J."/>
            <person name="Van Aken S."/>
            <person name="Pai G."/>
            <person name="Militscher J."/>
            <person name="Sellers P."/>
            <person name="Gill J.E."/>
            <person name="Feldblyum T.V."/>
            <person name="Preuss D."/>
            <person name="Lin X."/>
            <person name="Nierman W.C."/>
            <person name="Salzberg S.L."/>
            <person name="White O."/>
            <person name="Venter J.C."/>
            <person name="Fraser C.M."/>
            <person name="Kaneko T."/>
            <person name="Nakamura Y."/>
            <person name="Sato S."/>
            <person name="Kato T."/>
            <person name="Asamizu E."/>
            <person name="Sasamoto S."/>
            <person name="Kimura T."/>
            <person name="Idesawa K."/>
            <person name="Kawashima K."/>
            <person name="Kishida Y."/>
            <person name="Kiyokawa C."/>
            <person name="Kohara M."/>
            <person name="Matsumoto M."/>
            <person name="Matsuno A."/>
            <person name="Muraki A."/>
            <person name="Nakayama S."/>
            <person name="Nakazaki N."/>
            <person name="Shinpo S."/>
            <person name="Takeuchi C."/>
            <person name="Wada T."/>
            <person name="Watanabe A."/>
            <person name="Yamada M."/>
            <person name="Yasuda M."/>
            <person name="Tabata S."/>
        </authorList>
    </citation>
    <scope>NUCLEOTIDE SEQUENCE [LARGE SCALE GENOMIC DNA]</scope>
    <source>
        <strain>cv. Columbia</strain>
    </source>
</reference>
<reference key="2">
    <citation type="journal article" date="2017" name="Plant J.">
        <title>Araport11: a complete reannotation of the Arabidopsis thaliana reference genome.</title>
        <authorList>
            <person name="Cheng C.Y."/>
            <person name="Krishnakumar V."/>
            <person name="Chan A.P."/>
            <person name="Thibaud-Nissen F."/>
            <person name="Schobel S."/>
            <person name="Town C.D."/>
        </authorList>
    </citation>
    <scope>GENOME REANNOTATION</scope>
    <source>
        <strain>cv. Columbia</strain>
    </source>
</reference>
<reference key="3">
    <citation type="journal article" date="2002" name="Crit. Rev. Plant Sci.">
        <title>Lectin receptor kinases in plants.</title>
        <authorList>
            <person name="Barre A."/>
            <person name="Herve C."/>
            <person name="Lescure B."/>
            <person name="Rouge P."/>
        </authorList>
    </citation>
    <scope>GENE FAMILY</scope>
</reference>
<reference key="4">
    <citation type="journal article" date="2009" name="J. Exp. Bot.">
        <title>Arabidopsis L-type lectin receptor kinases: phylogeny, classification, and expression profiles.</title>
        <authorList>
            <person name="Bouwmeester K."/>
            <person name="Govers F."/>
        </authorList>
    </citation>
    <scope>GENE FAMILY</scope>
    <scope>NOMENCLATURE</scope>
</reference>
<reference key="5">
    <citation type="journal article" date="2014" name="Mol. Plant Microbe Interact.">
        <title>Phenotypic analyses of Arabidopsis T-DNA insertion lines and expression profiling reveal that multiple L-type lectin receptor kinases are involved in plant immunity.</title>
        <authorList>
            <person name="Wang Y."/>
            <person name="Bouwmeester K."/>
            <person name="Beseh P."/>
            <person name="Shan W."/>
            <person name="Govers F."/>
        </authorList>
    </citation>
    <scope>FUNCTION</scope>
    <scope>DISRUPTION PHENOTYPE</scope>
    <source>
        <strain>cv. Columbia</strain>
    </source>
</reference>
<name>LRK11_ARATH</name>
<organism>
    <name type="scientific">Arabidopsis thaliana</name>
    <name type="common">Mouse-ear cress</name>
    <dbReference type="NCBI Taxonomy" id="3702"/>
    <lineage>
        <taxon>Eukaryota</taxon>
        <taxon>Viridiplantae</taxon>
        <taxon>Streptophyta</taxon>
        <taxon>Embryophyta</taxon>
        <taxon>Tracheophyta</taxon>
        <taxon>Spermatophyta</taxon>
        <taxon>Magnoliopsida</taxon>
        <taxon>eudicotyledons</taxon>
        <taxon>Gunneridae</taxon>
        <taxon>Pentapetalae</taxon>
        <taxon>rosids</taxon>
        <taxon>malvids</taxon>
        <taxon>Brassicales</taxon>
        <taxon>Brassicaceae</taxon>
        <taxon>Camelineae</taxon>
        <taxon>Arabidopsis</taxon>
    </lineage>
</organism>
<evidence type="ECO:0000250" key="1">
    <source>
        <dbReference type="UniProtKB" id="Q9LSR8"/>
    </source>
</evidence>
<evidence type="ECO:0000255" key="2"/>
<evidence type="ECO:0000255" key="3">
    <source>
        <dbReference type="PROSITE-ProRule" id="PRU00159"/>
    </source>
</evidence>
<evidence type="ECO:0000269" key="4">
    <source>
    </source>
</evidence>
<evidence type="ECO:0000303" key="5">
    <source>
    </source>
</evidence>
<evidence type="ECO:0000305" key="6"/>
<evidence type="ECO:0000312" key="7">
    <source>
        <dbReference type="Araport" id="AT3G45330"/>
    </source>
</evidence>
<evidence type="ECO:0000312" key="8">
    <source>
        <dbReference type="EMBL" id="CAB72482.1"/>
    </source>
</evidence>
<protein>
    <recommendedName>
        <fullName evidence="5">Putative L-type lectin-domain containing receptor kinase I.1</fullName>
        <shortName evidence="5">LecRK-I.1</shortName>
        <ecNumber evidence="3">2.7.11.1</ecNumber>
    </recommendedName>
</protein>
<gene>
    <name evidence="5" type="primary">LECRK11</name>
    <name evidence="7" type="ordered locus">At3g45330</name>
    <name evidence="8" type="ORF">F18N11.90</name>
</gene>
<keyword id="KW-0067">ATP-binding</keyword>
<keyword id="KW-1003">Cell membrane</keyword>
<keyword id="KW-0325">Glycoprotein</keyword>
<keyword id="KW-0418">Kinase</keyword>
<keyword id="KW-0430">Lectin</keyword>
<keyword id="KW-0472">Membrane</keyword>
<keyword id="KW-0547">Nucleotide-binding</keyword>
<keyword id="KW-0611">Plant defense</keyword>
<keyword id="KW-0675">Receptor</keyword>
<keyword id="KW-1185">Reference proteome</keyword>
<keyword id="KW-0723">Serine/threonine-protein kinase</keyword>
<keyword id="KW-0732">Signal</keyword>
<keyword id="KW-0808">Transferase</keyword>
<keyword id="KW-0812">Transmembrane</keyword>
<keyword id="KW-1133">Transmembrane helix</keyword>
<feature type="signal peptide" evidence="2">
    <location>
        <begin position="1"/>
        <end position="19"/>
    </location>
</feature>
<feature type="chain" id="PRO_0000403070" description="Putative L-type lectin-domain containing receptor kinase I.1">
    <location>
        <begin position="20"/>
        <end position="682"/>
    </location>
</feature>
<feature type="topological domain" description="Extracellular" evidence="2">
    <location>
        <begin position="20"/>
        <end position="292"/>
    </location>
</feature>
<feature type="transmembrane region" description="Helical" evidence="2">
    <location>
        <begin position="293"/>
        <end position="313"/>
    </location>
</feature>
<feature type="topological domain" description="Cytoplasmic" evidence="2">
    <location>
        <begin position="314"/>
        <end position="682"/>
    </location>
</feature>
<feature type="domain" description="Protein kinase" evidence="3">
    <location>
        <begin position="348"/>
        <end position="622"/>
    </location>
</feature>
<feature type="region of interest" description="Legume-lectin like" evidence="2">
    <location>
        <begin position="27"/>
        <end position="264"/>
    </location>
</feature>
<feature type="active site" description="Proton acceptor" evidence="3">
    <location>
        <position position="472"/>
    </location>
</feature>
<feature type="binding site" evidence="3">
    <location>
        <begin position="354"/>
        <end position="362"/>
    </location>
    <ligand>
        <name>ATP</name>
        <dbReference type="ChEBI" id="CHEBI:30616"/>
    </ligand>
</feature>
<feature type="binding site" evidence="3">
    <location>
        <position position="376"/>
    </location>
    <ligand>
        <name>ATP</name>
        <dbReference type="ChEBI" id="CHEBI:30616"/>
    </ligand>
</feature>
<feature type="glycosylation site" description="N-linked (GlcNAc...) asparagine" evidence="2">
    <location>
        <position position="60"/>
    </location>
</feature>
<feature type="glycosylation site" description="N-linked (GlcNAc...) asparagine" evidence="2">
    <location>
        <position position="130"/>
    </location>
</feature>
<feature type="glycosylation site" description="N-linked (GlcNAc...) asparagine" evidence="2">
    <location>
        <position position="187"/>
    </location>
</feature>
<feature type="glycosylation site" description="N-linked (GlcNAc...) asparagine" evidence="2">
    <location>
        <position position="210"/>
    </location>
</feature>
<feature type="glycosylation site" description="N-linked (GlcNAc...) asparagine" evidence="2">
    <location>
        <position position="231"/>
    </location>
</feature>
<dbReference type="EC" id="2.7.11.1" evidence="3"/>
<dbReference type="EMBL" id="AL132953">
    <property type="protein sequence ID" value="CAB72482.1"/>
    <property type="molecule type" value="Genomic_DNA"/>
</dbReference>
<dbReference type="EMBL" id="CP002686">
    <property type="protein sequence ID" value="AEE78024.1"/>
    <property type="molecule type" value="Genomic_DNA"/>
</dbReference>
<dbReference type="PIR" id="T47473">
    <property type="entry name" value="T47473"/>
</dbReference>
<dbReference type="RefSeq" id="NP_190119.1">
    <property type="nucleotide sequence ID" value="NM_114402.2"/>
</dbReference>
<dbReference type="SMR" id="Q9M3E5"/>
<dbReference type="STRING" id="3702.Q9M3E5"/>
<dbReference type="GlyCosmos" id="Q9M3E5">
    <property type="glycosylation" value="5 sites, No reported glycans"/>
</dbReference>
<dbReference type="GlyGen" id="Q9M3E5">
    <property type="glycosylation" value="5 sites"/>
</dbReference>
<dbReference type="iPTMnet" id="Q9M3E5"/>
<dbReference type="PaxDb" id="3702-AT3G45330.1"/>
<dbReference type="ProteomicsDB" id="238776"/>
<dbReference type="EnsemblPlants" id="AT3G45330.1">
    <property type="protein sequence ID" value="AT3G45330.1"/>
    <property type="gene ID" value="AT3G45330"/>
</dbReference>
<dbReference type="GeneID" id="823671"/>
<dbReference type="Gramene" id="AT3G45330.1">
    <property type="protein sequence ID" value="AT3G45330.1"/>
    <property type="gene ID" value="AT3G45330"/>
</dbReference>
<dbReference type="KEGG" id="ath:AT3G45330"/>
<dbReference type="Araport" id="AT3G45330"/>
<dbReference type="TAIR" id="AT3G45330">
    <property type="gene designation" value="LECRK-I.1"/>
</dbReference>
<dbReference type="eggNOG" id="ENOG502QSJ4">
    <property type="taxonomic scope" value="Eukaryota"/>
</dbReference>
<dbReference type="HOGENOM" id="CLU_000288_62_3_1"/>
<dbReference type="InParanoid" id="Q9M3E5"/>
<dbReference type="OMA" id="VQYINRH"/>
<dbReference type="PhylomeDB" id="Q9M3E5"/>
<dbReference type="PRO" id="PR:Q9M3E5"/>
<dbReference type="Proteomes" id="UP000006548">
    <property type="component" value="Chromosome 3"/>
</dbReference>
<dbReference type="ExpressionAtlas" id="Q9M3E5">
    <property type="expression patterns" value="baseline and differential"/>
</dbReference>
<dbReference type="GO" id="GO:0005886">
    <property type="term" value="C:plasma membrane"/>
    <property type="evidence" value="ECO:0000250"/>
    <property type="project" value="UniProtKB"/>
</dbReference>
<dbReference type="GO" id="GO:0005524">
    <property type="term" value="F:ATP binding"/>
    <property type="evidence" value="ECO:0007669"/>
    <property type="project" value="UniProtKB-KW"/>
</dbReference>
<dbReference type="GO" id="GO:0030246">
    <property type="term" value="F:carbohydrate binding"/>
    <property type="evidence" value="ECO:0007669"/>
    <property type="project" value="UniProtKB-KW"/>
</dbReference>
<dbReference type="GO" id="GO:0106310">
    <property type="term" value="F:protein serine kinase activity"/>
    <property type="evidence" value="ECO:0007669"/>
    <property type="project" value="RHEA"/>
</dbReference>
<dbReference type="GO" id="GO:0004674">
    <property type="term" value="F:protein serine/threonine kinase activity"/>
    <property type="evidence" value="ECO:0007669"/>
    <property type="project" value="UniProtKB-KW"/>
</dbReference>
<dbReference type="GO" id="GO:0050832">
    <property type="term" value="P:defense response to fungus"/>
    <property type="evidence" value="ECO:0000315"/>
    <property type="project" value="UniProtKB"/>
</dbReference>
<dbReference type="CDD" id="cd06899">
    <property type="entry name" value="lectin_legume_LecRK_Arcelin_ConA"/>
    <property type="match status" value="1"/>
</dbReference>
<dbReference type="FunFam" id="3.30.200.20:FF:000451">
    <property type="entry name" value="L-type lectin-domain containing receptor kinase I.9"/>
    <property type="match status" value="1"/>
</dbReference>
<dbReference type="FunFam" id="1.10.510.10:FF:000108">
    <property type="entry name" value="L-type lectin-domain containing receptor kinase S.4"/>
    <property type="match status" value="1"/>
</dbReference>
<dbReference type="FunFam" id="2.60.120.200:FF:000096">
    <property type="entry name" value="L-type lectin-domain containing receptor kinase V.9"/>
    <property type="match status" value="1"/>
</dbReference>
<dbReference type="Gene3D" id="2.60.120.200">
    <property type="match status" value="1"/>
</dbReference>
<dbReference type="Gene3D" id="3.30.200.20">
    <property type="entry name" value="Phosphorylase Kinase, domain 1"/>
    <property type="match status" value="1"/>
</dbReference>
<dbReference type="Gene3D" id="1.10.510.10">
    <property type="entry name" value="Transferase(Phosphotransferase) domain 1"/>
    <property type="match status" value="1"/>
</dbReference>
<dbReference type="InterPro" id="IPR013320">
    <property type="entry name" value="ConA-like_dom_sf"/>
</dbReference>
<dbReference type="InterPro" id="IPR011009">
    <property type="entry name" value="Kinase-like_dom_sf"/>
</dbReference>
<dbReference type="InterPro" id="IPR050528">
    <property type="entry name" value="L-type_Lectin-RKs"/>
</dbReference>
<dbReference type="InterPro" id="IPR001220">
    <property type="entry name" value="Legume_lectin_dom"/>
</dbReference>
<dbReference type="InterPro" id="IPR000719">
    <property type="entry name" value="Prot_kinase_dom"/>
</dbReference>
<dbReference type="InterPro" id="IPR017441">
    <property type="entry name" value="Protein_kinase_ATP_BS"/>
</dbReference>
<dbReference type="InterPro" id="IPR001245">
    <property type="entry name" value="Ser-Thr/Tyr_kinase_cat_dom"/>
</dbReference>
<dbReference type="InterPro" id="IPR008271">
    <property type="entry name" value="Ser/Thr_kinase_AS"/>
</dbReference>
<dbReference type="PANTHER" id="PTHR27007">
    <property type="match status" value="1"/>
</dbReference>
<dbReference type="Pfam" id="PF00139">
    <property type="entry name" value="Lectin_legB"/>
    <property type="match status" value="1"/>
</dbReference>
<dbReference type="Pfam" id="PF07714">
    <property type="entry name" value="PK_Tyr_Ser-Thr"/>
    <property type="match status" value="1"/>
</dbReference>
<dbReference type="SMART" id="SM00220">
    <property type="entry name" value="S_TKc"/>
    <property type="match status" value="1"/>
</dbReference>
<dbReference type="SUPFAM" id="SSF49899">
    <property type="entry name" value="Concanavalin A-like lectins/glucanases"/>
    <property type="match status" value="1"/>
</dbReference>
<dbReference type="SUPFAM" id="SSF56112">
    <property type="entry name" value="Protein kinase-like (PK-like)"/>
    <property type="match status" value="1"/>
</dbReference>
<dbReference type="PROSITE" id="PS00107">
    <property type="entry name" value="PROTEIN_KINASE_ATP"/>
    <property type="match status" value="1"/>
</dbReference>
<dbReference type="PROSITE" id="PS50011">
    <property type="entry name" value="PROTEIN_KINASE_DOM"/>
    <property type="match status" value="1"/>
</dbReference>
<dbReference type="PROSITE" id="PS00108">
    <property type="entry name" value="PROTEIN_KINASE_ST"/>
    <property type="match status" value="1"/>
</dbReference>
<sequence>MAQRLHLLLLLFLICFVNLISFSSQQDLSFIYNGFNQDQTNLNLDGSAKFLQDGLLQLTNATTQQKGHAFFNRPFEFGSASSQSPSFSTHFVCALVPKPGVDGGHGIAFVLSSSMDLTQADPTQYLGLFNISTNGSPSSHLLAIELDTVQSAEFDDRDKNHVGIDENSLQSVESASASYYSDKEGKNKSLKLLSGDPIQVWIDYEDTLLNVTLAPLKTQKPSKPLLSITINLTAIFPDRKAFIGFSAATGSLISYQYILGWSFSRNRALLQSLDISKLPTVPRPKKPEKTSPLLIVLLIILAIIVMVVVGGFYLYRRKKYAEVREPWEKPYGPLRYSYKSLYKATRGFNKDGRLGRGGFGEVYKGTLPILGDIAVKRLSHDAEQGMKQFVAEVVTMGSLQHKNLVPLLGYCRRKGELLLVSKYMEGGSVDQYLFHGDKPPLSWSQRVSILRDIASALCYLHTGASQVVLHRDIKASNVMLNGNLQGFLGDFGMARFDDHGSNLSATAAVGTIGYMALELTSTGTSTRTDVYAFGAFMLEVTCGRRPFDPAMPVEKRHLVKWVCECWREGSLVNAVDTRLRGKFVPGEVEMVLKLGLLCTSIIPEARPNMEQVVQYINRHQRLPEFSPNTPGIGVSTPVLMGLPSLAITSSSVTSSVSGPSASPSSANNSMFISHTIIYGDGR</sequence>
<comment type="function">
    <text evidence="4">Involved in resistance response to the pathogenic fungus Alternaria brassicicola.</text>
</comment>
<comment type="catalytic activity">
    <reaction evidence="3">
        <text>L-seryl-[protein] + ATP = O-phospho-L-seryl-[protein] + ADP + H(+)</text>
        <dbReference type="Rhea" id="RHEA:17989"/>
        <dbReference type="Rhea" id="RHEA-COMP:9863"/>
        <dbReference type="Rhea" id="RHEA-COMP:11604"/>
        <dbReference type="ChEBI" id="CHEBI:15378"/>
        <dbReference type="ChEBI" id="CHEBI:29999"/>
        <dbReference type="ChEBI" id="CHEBI:30616"/>
        <dbReference type="ChEBI" id="CHEBI:83421"/>
        <dbReference type="ChEBI" id="CHEBI:456216"/>
        <dbReference type="EC" id="2.7.11.1"/>
    </reaction>
</comment>
<comment type="catalytic activity">
    <reaction evidence="3">
        <text>L-threonyl-[protein] + ATP = O-phospho-L-threonyl-[protein] + ADP + H(+)</text>
        <dbReference type="Rhea" id="RHEA:46608"/>
        <dbReference type="Rhea" id="RHEA-COMP:11060"/>
        <dbReference type="Rhea" id="RHEA-COMP:11605"/>
        <dbReference type="ChEBI" id="CHEBI:15378"/>
        <dbReference type="ChEBI" id="CHEBI:30013"/>
        <dbReference type="ChEBI" id="CHEBI:30616"/>
        <dbReference type="ChEBI" id="CHEBI:61977"/>
        <dbReference type="ChEBI" id="CHEBI:456216"/>
        <dbReference type="EC" id="2.7.11.1"/>
    </reaction>
</comment>
<comment type="subcellular location">
    <subcellularLocation>
        <location evidence="1">Cell membrane</location>
        <topology evidence="2">Single-pass type I membrane protein</topology>
    </subcellularLocation>
</comment>
<comment type="disruption phenotype">
    <text evidence="4">Increased susceptibility to the fungus Alternaria brassicicola.</text>
</comment>
<comment type="similarity">
    <text evidence="6">In the C-terminal section; belongs to the protein kinase superfamily. Ser/Thr protein kinase family.</text>
</comment>
<comment type="similarity">
    <text evidence="6">In the N-terminal section; belongs to the leguminous lectin family.</text>
</comment>
<accession>Q9M3E5</accession>
<proteinExistence type="inferred from homology"/>